<organism>
    <name type="scientific">Loxodonta africana</name>
    <name type="common">African elephant</name>
    <dbReference type="NCBI Taxonomy" id="9785"/>
    <lineage>
        <taxon>Eukaryota</taxon>
        <taxon>Metazoa</taxon>
        <taxon>Chordata</taxon>
        <taxon>Craniata</taxon>
        <taxon>Vertebrata</taxon>
        <taxon>Euteleostomi</taxon>
        <taxon>Mammalia</taxon>
        <taxon>Eutheria</taxon>
        <taxon>Afrotheria</taxon>
        <taxon>Proboscidea</taxon>
        <taxon>Elephantidae</taxon>
        <taxon>Loxodonta</taxon>
    </lineage>
</organism>
<protein>
    <recommendedName>
        <fullName>Cortactin-binding protein 2</fullName>
        <shortName>CortBP2</shortName>
    </recommendedName>
</protein>
<comment type="function">
    <text evidence="2">Regulates the dendritic spine distribution of CTTN/cortactin in hippocampal neurons, and thus controls dendritic spinogenesis and dendritic spine maintenance. Associates with the striatin-interacting phosphatase and kinase (STRIPAK) core complex to regulate dendritic spine distribution of the STRIPAK complex in hippocampal neurons.</text>
</comment>
<comment type="subunit">
    <text evidence="2">Interacts with CTTN/cortactin SH3 domain. Interacts with STRN, STRN4/zinedin and MOB4/phocein; this interactions mediate the association with the STRIPAK core complex and may regulate dendritic spine distribution of the STRIPAK complex in hippocampal neurons. Activation of glutamate receptors weakens the interaction with STRN and STRN4.</text>
</comment>
<comment type="subcellular location">
    <subcellularLocation>
        <location evidence="1">Cytoplasm</location>
        <location evidence="1">Cell cortex</location>
    </subcellularLocation>
    <subcellularLocation>
        <location evidence="2">Cell projection</location>
        <location evidence="2">Dendritic spine</location>
    </subcellularLocation>
    <text evidence="2">Remains associated with dendritic spines even after glutamate stimulation.</text>
</comment>
<reference key="1">
    <citation type="submission" date="2006-07" db="EMBL/GenBank/DDBJ databases">
        <title>NISC comparative sequencing initiative.</title>
        <authorList>
            <person name="Antonellis A."/>
            <person name="Ayele K."/>
            <person name="Benjamin B."/>
            <person name="Blakesley R.W."/>
            <person name="Boakye A."/>
            <person name="Bouffard G.G."/>
            <person name="Brinkley C."/>
            <person name="Brooks S."/>
            <person name="Chu G."/>
            <person name="Coleman H."/>
            <person name="Engle J."/>
            <person name="Gestole M."/>
            <person name="Greene A."/>
            <person name="Guan X."/>
            <person name="Gupta J."/>
            <person name="Haghighi P."/>
            <person name="Han J."/>
            <person name="Hansen N."/>
            <person name="Ho S.-L."/>
            <person name="Hu P."/>
            <person name="Hunter G."/>
            <person name="Hurle B."/>
            <person name="Idol J.R."/>
            <person name="Kwong P."/>
            <person name="Laric P."/>
            <person name="Larson S."/>
            <person name="Lee-Lin S.-Q."/>
            <person name="Legaspi R."/>
            <person name="Madden M."/>
            <person name="Maduro Q.L."/>
            <person name="Maduro V.B."/>
            <person name="Margulies E.H."/>
            <person name="Masiello C."/>
            <person name="Maskeri B."/>
            <person name="McDowell J."/>
            <person name="Mojidi H.A."/>
            <person name="Mullikin J.C."/>
            <person name="Oestreicher J.S."/>
            <person name="Park M."/>
            <person name="Portnoy M.E."/>
            <person name="Prasad A."/>
            <person name="Puri O."/>
            <person name="Reddix-Dugue N."/>
            <person name="Schandler K."/>
            <person name="Schueler M.G."/>
            <person name="Sison C."/>
            <person name="Stantripop S."/>
            <person name="Stephen E."/>
            <person name="Taye A."/>
            <person name="Thomas J.W."/>
            <person name="Thomas P.J."/>
            <person name="Tsipouri V."/>
            <person name="Ung L."/>
            <person name="Vogt J.L."/>
            <person name="Wetherby K.D."/>
            <person name="Young A."/>
            <person name="Green E.D."/>
        </authorList>
    </citation>
    <scope>NUCLEOTIDE SEQUENCE [LARGE SCALE GENOMIC DNA]</scope>
</reference>
<name>CTTB2_LOXAF</name>
<accession>Q108T9</accession>
<evidence type="ECO:0000250" key="1">
    <source>
        <dbReference type="UniProtKB" id="B9EJA2"/>
    </source>
</evidence>
<evidence type="ECO:0000250" key="2">
    <source>
        <dbReference type="UniProtKB" id="Q2IBD4"/>
    </source>
</evidence>
<evidence type="ECO:0000250" key="3">
    <source>
        <dbReference type="UniProtKB" id="Q8WZ74"/>
    </source>
</evidence>
<evidence type="ECO:0000255" key="4"/>
<evidence type="ECO:0000256" key="5">
    <source>
        <dbReference type="SAM" id="MobiDB-lite"/>
    </source>
</evidence>
<proteinExistence type="inferred from homology"/>
<dbReference type="EMBL" id="DP000087">
    <property type="protein sequence ID" value="ABG66653.1"/>
    <property type="molecule type" value="Genomic_DNA"/>
</dbReference>
<dbReference type="SMR" id="Q108T9"/>
<dbReference type="FunCoup" id="Q108T9">
    <property type="interactions" value="30"/>
</dbReference>
<dbReference type="eggNOG" id="ENOG502QWG2">
    <property type="taxonomic scope" value="Eukaryota"/>
</dbReference>
<dbReference type="HOGENOM" id="CLU_004926_0_0_1"/>
<dbReference type="InParanoid" id="Q108T9"/>
<dbReference type="Proteomes" id="UP000007646">
    <property type="component" value="Unassembled WGS sequence"/>
</dbReference>
<dbReference type="GO" id="GO:0015629">
    <property type="term" value="C:actin cytoskeleton"/>
    <property type="evidence" value="ECO:0007669"/>
    <property type="project" value="TreeGrafter"/>
</dbReference>
<dbReference type="GO" id="GO:0005938">
    <property type="term" value="C:cell cortex"/>
    <property type="evidence" value="ECO:0007669"/>
    <property type="project" value="UniProtKB-SubCell"/>
</dbReference>
<dbReference type="GO" id="GO:0043197">
    <property type="term" value="C:dendritic spine"/>
    <property type="evidence" value="ECO:0000250"/>
    <property type="project" value="UniProtKB"/>
</dbReference>
<dbReference type="GO" id="GO:0090443">
    <property type="term" value="C:FAR/SIN/STRIPAK complex"/>
    <property type="evidence" value="ECO:0000250"/>
    <property type="project" value="UniProtKB"/>
</dbReference>
<dbReference type="GO" id="GO:0051721">
    <property type="term" value="F:protein phosphatase 2A binding"/>
    <property type="evidence" value="ECO:0007669"/>
    <property type="project" value="TreeGrafter"/>
</dbReference>
<dbReference type="CDD" id="cd14686">
    <property type="entry name" value="bZIP"/>
    <property type="match status" value="1"/>
</dbReference>
<dbReference type="Gene3D" id="1.25.40.20">
    <property type="entry name" value="Ankyrin repeat-containing domain"/>
    <property type="match status" value="1"/>
</dbReference>
<dbReference type="InterPro" id="IPR002110">
    <property type="entry name" value="Ankyrin_rpt"/>
</dbReference>
<dbReference type="InterPro" id="IPR036770">
    <property type="entry name" value="Ankyrin_rpt-contain_sf"/>
</dbReference>
<dbReference type="InterPro" id="IPR050719">
    <property type="entry name" value="Cortactin-Actin_Reg"/>
</dbReference>
<dbReference type="InterPro" id="IPR019131">
    <property type="entry name" value="Cortactin-binding_p2_N"/>
</dbReference>
<dbReference type="PANTHER" id="PTHR23166:SF9">
    <property type="entry name" value="CTTNBP2 N-TERMINAL-LIKE PROTEIN"/>
    <property type="match status" value="1"/>
</dbReference>
<dbReference type="PANTHER" id="PTHR23166">
    <property type="entry name" value="FILAMIN/GPBP-INTERACTING PROTEIN"/>
    <property type="match status" value="1"/>
</dbReference>
<dbReference type="Pfam" id="PF25408">
    <property type="entry name" value="AAA_lid_NAV1"/>
    <property type="match status" value="1"/>
</dbReference>
<dbReference type="Pfam" id="PF00023">
    <property type="entry name" value="Ank"/>
    <property type="match status" value="2"/>
</dbReference>
<dbReference type="Pfam" id="PF12796">
    <property type="entry name" value="Ank_2"/>
    <property type="match status" value="1"/>
</dbReference>
<dbReference type="Pfam" id="PF09727">
    <property type="entry name" value="CortBP2"/>
    <property type="match status" value="1"/>
</dbReference>
<dbReference type="SMART" id="SM00248">
    <property type="entry name" value="ANK"/>
    <property type="match status" value="6"/>
</dbReference>
<dbReference type="SUPFAM" id="SSF48403">
    <property type="entry name" value="Ankyrin repeat"/>
    <property type="match status" value="1"/>
</dbReference>
<dbReference type="PROSITE" id="PS50297">
    <property type="entry name" value="ANK_REP_REGION"/>
    <property type="match status" value="1"/>
</dbReference>
<dbReference type="PROSITE" id="PS50088">
    <property type="entry name" value="ANK_REPEAT"/>
    <property type="match status" value="4"/>
</dbReference>
<feature type="chain" id="PRO_0000250462" description="Cortactin-binding protein 2">
    <location>
        <begin position="1"/>
        <end position="1661"/>
    </location>
</feature>
<feature type="repeat" description="ANK 1">
    <location>
        <begin position="707"/>
        <end position="737"/>
    </location>
</feature>
<feature type="repeat" description="ANK 2">
    <location>
        <begin position="741"/>
        <end position="770"/>
    </location>
</feature>
<feature type="repeat" description="ANK 3">
    <location>
        <begin position="774"/>
        <end position="803"/>
    </location>
</feature>
<feature type="repeat" description="ANK 4">
    <location>
        <begin position="807"/>
        <end position="836"/>
    </location>
</feature>
<feature type="repeat" description="ANK 5">
    <location>
        <begin position="840"/>
        <end position="869"/>
    </location>
</feature>
<feature type="repeat" description="ANK 6">
    <location>
        <begin position="910"/>
        <end position="940"/>
    </location>
</feature>
<feature type="region of interest" description="Disordered" evidence="5">
    <location>
        <begin position="1"/>
        <end position="27"/>
    </location>
</feature>
<feature type="region of interest" description="Disordered" evidence="5">
    <location>
        <begin position="206"/>
        <end position="226"/>
    </location>
</feature>
<feature type="region of interest" description="Disordered" evidence="5">
    <location>
        <begin position="329"/>
        <end position="438"/>
    </location>
</feature>
<feature type="region of interest" description="Disordered" evidence="5">
    <location>
        <begin position="454"/>
        <end position="477"/>
    </location>
</feature>
<feature type="region of interest" description="Disordered" evidence="5">
    <location>
        <begin position="493"/>
        <end position="612"/>
    </location>
</feature>
<feature type="region of interest" description="Disordered" evidence="5">
    <location>
        <begin position="876"/>
        <end position="896"/>
    </location>
</feature>
<feature type="region of interest" description="Disordered" evidence="5">
    <location>
        <begin position="1444"/>
        <end position="1480"/>
    </location>
</feature>
<feature type="region of interest" description="Disordered" evidence="5">
    <location>
        <begin position="1555"/>
        <end position="1597"/>
    </location>
</feature>
<feature type="region of interest" description="Disordered" evidence="5">
    <location>
        <begin position="1614"/>
        <end position="1661"/>
    </location>
</feature>
<feature type="coiled-coil region" evidence="4">
    <location>
        <begin position="124"/>
        <end position="280"/>
    </location>
</feature>
<feature type="compositionally biased region" description="Low complexity" evidence="5">
    <location>
        <begin position="383"/>
        <end position="394"/>
    </location>
</feature>
<feature type="compositionally biased region" description="Polar residues" evidence="5">
    <location>
        <begin position="412"/>
        <end position="426"/>
    </location>
</feature>
<feature type="compositionally biased region" description="Low complexity" evidence="5">
    <location>
        <begin position="454"/>
        <end position="466"/>
    </location>
</feature>
<feature type="compositionally biased region" description="Polar residues" evidence="5">
    <location>
        <begin position="467"/>
        <end position="477"/>
    </location>
</feature>
<feature type="compositionally biased region" description="Polar residues" evidence="5">
    <location>
        <begin position="1580"/>
        <end position="1597"/>
    </location>
</feature>
<feature type="compositionally biased region" description="Low complexity" evidence="5">
    <location>
        <begin position="1622"/>
        <end position="1636"/>
    </location>
</feature>
<feature type="compositionally biased region" description="Basic and acidic residues" evidence="5">
    <location>
        <begin position="1643"/>
        <end position="1661"/>
    </location>
</feature>
<feature type="modified residue" description="Asymmetric dimethylarginine" evidence="1">
    <location>
        <position position="497"/>
    </location>
</feature>
<feature type="modified residue" description="Phosphoserine" evidence="3">
    <location>
        <position position="1522"/>
    </location>
</feature>
<sequence length="1661" mass="181265">MATDGASCEPDFSRASEDAAEATAEATAEAAKKEFDVDTLSKSELRMLLSVMEGELEARDLVIEALRARRKEVFIQERYGRFNLNDPFLALQRDYEAGAREKEKKPVCTNPLSILEAVMAHCRKMQERMSTQLAAAESRQKKLEMEKLQLQALEQEHKKLAARLEEERGKNKHVVLMLVKECKQLSGKVIEEAQKVEEVMAQLEEEKKRTNELEEELSTEKRRSTEMEAQMEKQLSEFDTEREQLRAKLNREEAHTTDLKEEIDKMKKMIEQLKRGNDSKPSLSLPRKVKDRRLVSVSVGTEGPVTRSVACQTDLVVESTDHVKKLPLTVPVKPSAGSPLVSASAKGNVVRPSVDRQASHGDLILSSVPTVPPPSVNKTEENGPSTGSTPDLPSSTPPLPNNTAPPAVQPPSIASQNYSQASSLHSLHSPCANASLHPGVNPRIQAVRFRFQGNANDQDQNGNTTQSPPSRDVSPTSRDNLVAKQLARNTVTQALSRFTGPQVGASARPGAPTTGDISTHPPVGRTSLKTSGVARVDRGNPPPIPPKKPGLSQTPSPPHPQLKVIMDSSRASNAGAKVDKTVASPPTSLPQGNRVINEENLPKSSSPQLPPKPSIDLTVAPAGCAVSALATSQVGAWRAETPGLNQPACSDSSLVIPTTIAFCSSINPVSASSCRPGASDSLLVTASGWSPSLTPLLMSGGPAPLAGRPTLLQQAAAQGNVTLLSMLLNEEGLDINYSCEDGHSALYSAAKNGHTDCVRLLLNAEAQVNAADKNGFTPLCAAAAQGHDKCVELLIAYRANINHAADGGQTPLYLACKNGNKECIKLLLEAGTDRSVKTRDGWTPVHAAVDTGNVDSLKLLMYHRAPACGDRLNEEEPESDVFDLDGGGERPEGTVKPVVPADLINHADREGWTAAHIAASKGFKNCLEILCQHGGLEPERNDKCNRTVHDVATDDCKHLLENLNALKIPLRISMSETQRDSFGSDDFECENTIWALTIRRQTSWDDFSKGVIQALTNHFQAISSDGWWSLEDVTFNNTTESSIGLGASSVLSIMLGSVSWSPGQSFAQSPWDFLKKNKAEQVTVLLSGPQEGCLSSVTYASMIPLPMLQNYLRLVEQYHNVIFHGPEGSLQDYIAHQLALCMKHRQMAVGFSCEIVRAEVDAAFCKEQLVDLFIRNACLIPVKQSPGNKKVIVILENLEKSSLSELLGDFLAPLENRSTESPCTFQKGNGTSECYYFHENCFLMGTIAKACLQGSDLLVQQHFRWVQLRWDGEPMQGLLQRFLRRKAVNKFRGKLSSPRDPVCKTVDWALSVWRQLNSCLARLGTPEALLGPKYFLSCPVVPGHAQATVKWMSKLWNAVIAPRVQEAILSKASVKRQPGLGQTNAKKHPSQGQQAVVKAALSILLNKAVLHGCPLPRAELDQYIAEFKGGSFPLSIVSSYSSCGKKKGENGAWRKVSTSPRKKSGRFPSPTWSKPDLSDEGIKNKTVSQLNCNRNASLSRQKCLENDLSLTLNLDQRLSLGSDDEADLVKELQSMCSSKSESDISKIADSRDDLRRFDSSRNSPAFSATVNNPRMPVSQKEVSPLSSHQTTECSNSKLKTELGVSRVKSFLPVPRSKVAQCSQNTRRSSSSSNTRQIEINNNSKDEIWNLRKNEQVEKPNK</sequence>
<keyword id="KW-0040">ANK repeat</keyword>
<keyword id="KW-0966">Cell projection</keyword>
<keyword id="KW-0175">Coiled coil</keyword>
<keyword id="KW-0963">Cytoplasm</keyword>
<keyword id="KW-0488">Methylation</keyword>
<keyword id="KW-0597">Phosphoprotein</keyword>
<keyword id="KW-1185">Reference proteome</keyword>
<keyword id="KW-0677">Repeat</keyword>
<keyword id="KW-0770">Synapse</keyword>
<gene>
    <name type="primary">CTTNBP2</name>
    <name type="synonym">CORTBP2</name>
</gene>